<comment type="function">
    <text>Antifungal heat stable protein produced in response to injury. It is active against C.albicans. No antibacterial activity against Gram-positive and Gram-negative bacteria.</text>
</comment>
<comment type="subcellular location">
    <subcellularLocation>
        <location>Secreted</location>
    </subcellularLocation>
</comment>
<comment type="developmental stage">
    <text>Highest expression in larvae and adult. To a much lesser extent in pupae.</text>
</comment>
<comment type="similarity">
    <text evidence="3">To H.diomphalia holotricin 3.</text>
</comment>
<accession>Q27270</accession>
<name>TEN3_TENMO</name>
<proteinExistence type="evidence at protein level"/>
<dbReference type="EMBL" id="U30627">
    <property type="protein sequence ID" value="AAA97579.1"/>
    <property type="molecule type" value="Genomic_DNA"/>
</dbReference>
<dbReference type="EMBL" id="U21482">
    <property type="protein sequence ID" value="AAB01064.1"/>
    <property type="molecule type" value="mRNA"/>
</dbReference>
<dbReference type="PIR" id="JC4581">
    <property type="entry name" value="JC4581"/>
</dbReference>
<dbReference type="GO" id="GO:0005576">
    <property type="term" value="C:extracellular region"/>
    <property type="evidence" value="ECO:0007669"/>
    <property type="project" value="UniProtKB-SubCell"/>
</dbReference>
<dbReference type="GO" id="GO:0042742">
    <property type="term" value="P:defense response to bacterium"/>
    <property type="evidence" value="ECO:0007669"/>
    <property type="project" value="UniProtKB-KW"/>
</dbReference>
<dbReference type="GO" id="GO:0050832">
    <property type="term" value="P:defense response to fungus"/>
    <property type="evidence" value="ECO:0007669"/>
    <property type="project" value="UniProtKB-KW"/>
</dbReference>
<dbReference type="GO" id="GO:0045087">
    <property type="term" value="P:innate immune response"/>
    <property type="evidence" value="ECO:0007669"/>
    <property type="project" value="UniProtKB-KW"/>
</dbReference>
<dbReference type="GO" id="GO:0031640">
    <property type="term" value="P:killing of cells of another organism"/>
    <property type="evidence" value="ECO:0007669"/>
    <property type="project" value="UniProtKB-KW"/>
</dbReference>
<reference key="1">
    <citation type="journal article" date="1996" name="Biochem. Biophys. Res. Commun.">
        <title>Structure and expression of the tenecin 3 gene in Tenebrio molitor.</title>
        <authorList>
            <person name="Lee Y.J."/>
            <person name="Chung T.J."/>
            <person name="Park C.W."/>
            <person name="Hahn Y."/>
            <person name="Chung J.H."/>
            <person name="Lee B.L."/>
            <person name="Han D.M."/>
            <person name="Jung Y.H."/>
            <person name="Kim S."/>
            <person name="Lee Y."/>
        </authorList>
    </citation>
    <scope>NUCLEOTIDE SEQUENCE [GENOMIC DNA]</scope>
    <source>
        <tissue>Larva</tissue>
    </source>
</reference>
<reference key="2">
    <citation type="journal article" date="1995" name="Mol. Cells">
        <title>Biochemical and molecular characterization of an antifungal protein from Tenebrio molitor larvae.</title>
        <authorList>
            <person name="Jung H.Y."/>
            <person name="Park B.Y."/>
            <person name="Lee D.-K."/>
            <person name="Hahn Y."/>
            <person name="Chung J.H."/>
            <person name="Han D.M."/>
            <person name="Moon H.J."/>
            <person name="Lee B.L."/>
            <person name="Lee Y."/>
        </authorList>
    </citation>
    <scope>NUCLEOTIDE SEQUENCE</scope>
    <scope>PROTEIN SEQUENCE OF 19-43</scope>
    <source>
        <tissue>Hemolymph</tissue>
    </source>
</reference>
<organism>
    <name type="scientific">Tenebrio molitor</name>
    <name type="common">Yellow mealworm beetle</name>
    <dbReference type="NCBI Taxonomy" id="7067"/>
    <lineage>
        <taxon>Eukaryota</taxon>
        <taxon>Metazoa</taxon>
        <taxon>Ecdysozoa</taxon>
        <taxon>Arthropoda</taxon>
        <taxon>Hexapoda</taxon>
        <taxon>Insecta</taxon>
        <taxon>Pterygota</taxon>
        <taxon>Neoptera</taxon>
        <taxon>Endopterygota</taxon>
        <taxon>Coleoptera</taxon>
        <taxon>Polyphaga</taxon>
        <taxon>Cucujiformia</taxon>
        <taxon>Tenebrionidae</taxon>
        <taxon>Tenebrio</taxon>
    </lineage>
</organism>
<feature type="signal peptide" evidence="2">
    <location>
        <begin position="1"/>
        <end position="18"/>
    </location>
</feature>
<feature type="chain" id="PRO_0000004991" description="Tenecin-3">
    <location>
        <begin position="19"/>
        <end position="96"/>
    </location>
</feature>
<feature type="repeat" description="1">
    <location>
        <begin position="23"/>
        <end position="26"/>
    </location>
</feature>
<feature type="repeat" description="2">
    <location>
        <begin position="31"/>
        <end position="34"/>
    </location>
</feature>
<feature type="repeat" description="3">
    <location>
        <begin position="35"/>
        <end position="38"/>
    </location>
</feature>
<feature type="repeat" description="4">
    <location>
        <begin position="39"/>
        <end position="42"/>
    </location>
</feature>
<feature type="repeat" description="5">
    <location>
        <begin position="43"/>
        <end position="46"/>
    </location>
</feature>
<feature type="repeat" description="6">
    <location>
        <begin position="47"/>
        <end position="50"/>
    </location>
</feature>
<feature type="repeat" description="7">
    <location>
        <begin position="51"/>
        <end position="54"/>
    </location>
</feature>
<feature type="repeat" description="8">
    <location>
        <begin position="59"/>
        <end position="62"/>
    </location>
</feature>
<feature type="repeat" description="9">
    <location>
        <begin position="63"/>
        <end position="66"/>
    </location>
</feature>
<feature type="repeat" description="10">
    <location>
        <begin position="67"/>
        <end position="70"/>
    </location>
</feature>
<feature type="repeat" description="11">
    <location>
        <begin position="77"/>
        <end position="80"/>
    </location>
</feature>
<feature type="repeat" description="12">
    <location>
        <begin position="86"/>
        <end position="89"/>
    </location>
</feature>
<feature type="region of interest" description="Disordered" evidence="1">
    <location>
        <begin position="19"/>
        <end position="96"/>
    </location>
</feature>
<feature type="region of interest" description="12 X 4 AA repeats of G-X-X-G">
    <location>
        <begin position="23"/>
        <end position="89"/>
    </location>
</feature>
<feature type="compositionally biased region" description="Gly residues" evidence="1">
    <location>
        <begin position="26"/>
        <end position="89"/>
    </location>
</feature>
<sequence length="96" mass="9295">MKTFVICLILVVAVSAAPDHHDGHLGGHQTGHQGGQQGGHLGGQQGGHLGGHQGGQPGGHLGGHQGGIGGTGGQQHGQHGPGTGAGHQGGYKTHGH</sequence>
<evidence type="ECO:0000256" key="1">
    <source>
        <dbReference type="SAM" id="MobiDB-lite"/>
    </source>
</evidence>
<evidence type="ECO:0000269" key="2">
    <source ref="2"/>
</evidence>
<evidence type="ECO:0000305" key="3"/>
<keyword id="KW-0044">Antibiotic</keyword>
<keyword id="KW-0929">Antimicrobial</keyword>
<keyword id="KW-0903">Direct protein sequencing</keyword>
<keyword id="KW-0295">Fungicide</keyword>
<keyword id="KW-0391">Immunity</keyword>
<keyword id="KW-0399">Innate immunity</keyword>
<keyword id="KW-0677">Repeat</keyword>
<keyword id="KW-0964">Secreted</keyword>
<keyword id="KW-0732">Signal</keyword>
<protein>
    <recommendedName>
        <fullName>Tenecin-3</fullName>
    </recommendedName>
</protein>